<accession>C1F0T4</accession>
<feature type="chain" id="PRO_1000190746" description="Potassium-transporting ATPase KdpC subunit">
    <location>
        <begin position="1"/>
        <end position="184"/>
    </location>
</feature>
<feature type="transmembrane region" description="Helical" evidence="1">
    <location>
        <begin position="6"/>
        <end position="26"/>
    </location>
</feature>
<reference key="1">
    <citation type="journal article" date="2009" name="Appl. Environ. Microbiol.">
        <title>Three genomes from the phylum Acidobacteria provide insight into the lifestyles of these microorganisms in soils.</title>
        <authorList>
            <person name="Ward N.L."/>
            <person name="Challacombe J.F."/>
            <person name="Janssen P.H."/>
            <person name="Henrissat B."/>
            <person name="Coutinho P.M."/>
            <person name="Wu M."/>
            <person name="Xie G."/>
            <person name="Haft D.H."/>
            <person name="Sait M."/>
            <person name="Badger J."/>
            <person name="Barabote R.D."/>
            <person name="Bradley B."/>
            <person name="Brettin T.S."/>
            <person name="Brinkac L.M."/>
            <person name="Bruce D."/>
            <person name="Creasy T."/>
            <person name="Daugherty S.C."/>
            <person name="Davidsen T.M."/>
            <person name="DeBoy R.T."/>
            <person name="Detter J.C."/>
            <person name="Dodson R.J."/>
            <person name="Durkin A.S."/>
            <person name="Ganapathy A."/>
            <person name="Gwinn-Giglio M."/>
            <person name="Han C.S."/>
            <person name="Khouri H."/>
            <person name="Kiss H."/>
            <person name="Kothari S.P."/>
            <person name="Madupu R."/>
            <person name="Nelson K.E."/>
            <person name="Nelson W.C."/>
            <person name="Paulsen I."/>
            <person name="Penn K."/>
            <person name="Ren Q."/>
            <person name="Rosovitz M.J."/>
            <person name="Selengut J.D."/>
            <person name="Shrivastava S."/>
            <person name="Sullivan S.A."/>
            <person name="Tapia R."/>
            <person name="Thompson L.S."/>
            <person name="Watkins K.L."/>
            <person name="Yang Q."/>
            <person name="Yu C."/>
            <person name="Zafar N."/>
            <person name="Zhou L."/>
            <person name="Kuske C.R."/>
        </authorList>
    </citation>
    <scope>NUCLEOTIDE SEQUENCE [LARGE SCALE GENOMIC DNA]</scope>
    <source>
        <strain>ATCC 51196 / DSM 11244 / BCRC 80197 / JCM 7670 / NBRC 15755 / NCIMB 13165 / 161</strain>
    </source>
</reference>
<keyword id="KW-0067">ATP-binding</keyword>
<keyword id="KW-0997">Cell inner membrane</keyword>
<keyword id="KW-1003">Cell membrane</keyword>
<keyword id="KW-0406">Ion transport</keyword>
<keyword id="KW-0472">Membrane</keyword>
<keyword id="KW-0547">Nucleotide-binding</keyword>
<keyword id="KW-0630">Potassium</keyword>
<keyword id="KW-0633">Potassium transport</keyword>
<keyword id="KW-1185">Reference proteome</keyword>
<keyword id="KW-0812">Transmembrane</keyword>
<keyword id="KW-1133">Transmembrane helix</keyword>
<keyword id="KW-0813">Transport</keyword>
<sequence length="184" mass="19512">MNHLRTAVLYTIISAVFLGLGYPLIMTGLAQWIFPRQANGSLIVRNGQVIGSKLIGQTFSGAGYFHSRPSAAGNGYDAESSGGSNLAPTNHALIQQVEQRAAAEQVGATKVPVDLVTASASGLDPDITPAAAYYQAPRIAKARHLPLAAVRKLIAEQTTARQFGLLGEPRVNVLAINLKLDQMH</sequence>
<evidence type="ECO:0000255" key="1">
    <source>
        <dbReference type="HAMAP-Rule" id="MF_00276"/>
    </source>
</evidence>
<protein>
    <recommendedName>
        <fullName evidence="1">Potassium-transporting ATPase KdpC subunit</fullName>
    </recommendedName>
    <alternativeName>
        <fullName evidence="1">ATP phosphohydrolase [potassium-transporting] C chain</fullName>
    </alternativeName>
    <alternativeName>
        <fullName evidence="1">Potassium-binding and translocating subunit C</fullName>
    </alternativeName>
    <alternativeName>
        <fullName evidence="1">Potassium-translocating ATPase C chain</fullName>
    </alternativeName>
</protein>
<organism>
    <name type="scientific">Acidobacterium capsulatum (strain ATCC 51196 / DSM 11244 / BCRC 80197 / JCM 7670 / NBRC 15755 / NCIMB 13165 / 161)</name>
    <dbReference type="NCBI Taxonomy" id="240015"/>
    <lineage>
        <taxon>Bacteria</taxon>
        <taxon>Pseudomonadati</taxon>
        <taxon>Acidobacteriota</taxon>
        <taxon>Terriglobia</taxon>
        <taxon>Terriglobales</taxon>
        <taxon>Acidobacteriaceae</taxon>
        <taxon>Acidobacterium</taxon>
    </lineage>
</organism>
<proteinExistence type="inferred from homology"/>
<name>KDPC_ACIC5</name>
<dbReference type="EMBL" id="CP001472">
    <property type="protein sequence ID" value="ACO31418.1"/>
    <property type="molecule type" value="Genomic_DNA"/>
</dbReference>
<dbReference type="RefSeq" id="WP_012680825.1">
    <property type="nucleotide sequence ID" value="NC_012483.1"/>
</dbReference>
<dbReference type="SMR" id="C1F0T4"/>
<dbReference type="FunCoup" id="C1F0T4">
    <property type="interactions" value="163"/>
</dbReference>
<dbReference type="STRING" id="240015.ACP_0431"/>
<dbReference type="KEGG" id="aca:ACP_0431"/>
<dbReference type="eggNOG" id="COG2156">
    <property type="taxonomic scope" value="Bacteria"/>
</dbReference>
<dbReference type="HOGENOM" id="CLU_077094_2_0_0"/>
<dbReference type="InParanoid" id="C1F0T4"/>
<dbReference type="OrthoDB" id="9809491at2"/>
<dbReference type="Proteomes" id="UP000002207">
    <property type="component" value="Chromosome"/>
</dbReference>
<dbReference type="GO" id="GO:0005886">
    <property type="term" value="C:plasma membrane"/>
    <property type="evidence" value="ECO:0007669"/>
    <property type="project" value="UniProtKB-SubCell"/>
</dbReference>
<dbReference type="GO" id="GO:0005524">
    <property type="term" value="F:ATP binding"/>
    <property type="evidence" value="ECO:0007669"/>
    <property type="project" value="UniProtKB-UniRule"/>
</dbReference>
<dbReference type="GO" id="GO:0008556">
    <property type="term" value="F:P-type potassium transmembrane transporter activity"/>
    <property type="evidence" value="ECO:0007669"/>
    <property type="project" value="InterPro"/>
</dbReference>
<dbReference type="HAMAP" id="MF_00276">
    <property type="entry name" value="KdpC"/>
    <property type="match status" value="1"/>
</dbReference>
<dbReference type="InterPro" id="IPR003820">
    <property type="entry name" value="KdpC"/>
</dbReference>
<dbReference type="NCBIfam" id="TIGR00681">
    <property type="entry name" value="kdpC"/>
    <property type="match status" value="1"/>
</dbReference>
<dbReference type="NCBIfam" id="NF001454">
    <property type="entry name" value="PRK00315.1"/>
    <property type="match status" value="1"/>
</dbReference>
<dbReference type="PANTHER" id="PTHR30042">
    <property type="entry name" value="POTASSIUM-TRANSPORTING ATPASE C CHAIN"/>
    <property type="match status" value="1"/>
</dbReference>
<dbReference type="PANTHER" id="PTHR30042:SF2">
    <property type="entry name" value="POTASSIUM-TRANSPORTING ATPASE KDPC SUBUNIT"/>
    <property type="match status" value="1"/>
</dbReference>
<dbReference type="Pfam" id="PF02669">
    <property type="entry name" value="KdpC"/>
    <property type="match status" value="1"/>
</dbReference>
<dbReference type="PIRSF" id="PIRSF001296">
    <property type="entry name" value="K_ATPase_KdpC"/>
    <property type="match status" value="1"/>
</dbReference>
<comment type="function">
    <text evidence="1">Part of the high-affinity ATP-driven potassium transport (or Kdp) system, which catalyzes the hydrolysis of ATP coupled with the electrogenic transport of potassium into the cytoplasm. This subunit acts as a catalytic chaperone that increases the ATP-binding affinity of the ATP-hydrolyzing subunit KdpB by the formation of a transient KdpB/KdpC/ATP ternary complex.</text>
</comment>
<comment type="subunit">
    <text evidence="1">The system is composed of three essential subunits: KdpA, KdpB and KdpC.</text>
</comment>
<comment type="subcellular location">
    <subcellularLocation>
        <location evidence="1">Cell inner membrane</location>
        <topology evidence="1">Single-pass membrane protein</topology>
    </subcellularLocation>
</comment>
<comment type="similarity">
    <text evidence="1">Belongs to the KdpC family.</text>
</comment>
<gene>
    <name evidence="1" type="primary">kdpC</name>
    <name type="ordered locus">ACP_0431</name>
</gene>